<proteinExistence type="evidence at protein level"/>
<feature type="chain" id="PRO_0000083803" description="3-isopropylmalate dehydrogenase">
    <location>
        <begin position="1"/>
        <end position="336"/>
    </location>
</feature>
<feature type="binding site" evidence="1">
    <location>
        <position position="87"/>
    </location>
    <ligand>
        <name>substrate</name>
    </ligand>
</feature>
<feature type="binding site" evidence="1">
    <location>
        <position position="97"/>
    </location>
    <ligand>
        <name>substrate</name>
    </ligand>
</feature>
<feature type="binding site" evidence="1">
    <location>
        <position position="121"/>
    </location>
    <ligand>
        <name>substrate</name>
    </ligand>
</feature>
<feature type="binding site" evidence="1">
    <location>
        <position position="211"/>
    </location>
    <ligand>
        <name>Mg(2+)</name>
        <dbReference type="ChEBI" id="CHEBI:18420"/>
    </ligand>
</feature>
<feature type="binding site" evidence="1">
    <location>
        <position position="211"/>
    </location>
    <ligand>
        <name>substrate</name>
    </ligand>
</feature>
<feature type="binding site" evidence="1">
    <location>
        <position position="235"/>
    </location>
    <ligand>
        <name>Mg(2+)</name>
        <dbReference type="ChEBI" id="CHEBI:18420"/>
    </ligand>
</feature>
<feature type="binding site" evidence="1">
    <location>
        <position position="239"/>
    </location>
    <ligand>
        <name>Mg(2+)</name>
        <dbReference type="ChEBI" id="CHEBI:18420"/>
    </ligand>
</feature>
<feature type="binding site" evidence="1">
    <location>
        <begin position="271"/>
        <end position="283"/>
    </location>
    <ligand>
        <name>NAD(+)</name>
        <dbReference type="ChEBI" id="CHEBI:57540"/>
    </ligand>
</feature>
<feature type="site" description="Important for catalysis" evidence="1">
    <location>
        <position position="128"/>
    </location>
</feature>
<feature type="site" description="Important for catalysis" evidence="1">
    <location>
        <position position="178"/>
    </location>
</feature>
<feature type="strand" evidence="6">
    <location>
        <begin position="2"/>
        <end position="9"/>
    </location>
</feature>
<feature type="helix" evidence="6">
    <location>
        <begin position="12"/>
        <end position="26"/>
    </location>
</feature>
<feature type="strand" evidence="6">
    <location>
        <begin position="31"/>
        <end position="34"/>
    </location>
</feature>
<feature type="helix" evidence="6">
    <location>
        <begin position="39"/>
        <end position="45"/>
    </location>
</feature>
<feature type="helix" evidence="6">
    <location>
        <begin position="51"/>
        <end position="57"/>
    </location>
</feature>
<feature type="strand" evidence="6">
    <location>
        <begin position="60"/>
        <end position="67"/>
    </location>
</feature>
<feature type="helix" evidence="6">
    <location>
        <begin position="77"/>
        <end position="81"/>
    </location>
</feature>
<feature type="helix" evidence="6">
    <location>
        <begin position="83"/>
        <end position="89"/>
    </location>
</feature>
<feature type="strand" evidence="6">
    <location>
        <begin position="94"/>
        <end position="100"/>
    </location>
</feature>
<feature type="strand" evidence="6">
    <location>
        <begin position="116"/>
        <end position="122"/>
    </location>
</feature>
<feature type="strand" evidence="7">
    <location>
        <begin position="124"/>
        <end position="126"/>
    </location>
</feature>
<feature type="helix" evidence="6">
    <location>
        <begin position="127"/>
        <end position="129"/>
    </location>
</feature>
<feature type="strand" evidence="6">
    <location>
        <begin position="132"/>
        <end position="136"/>
    </location>
</feature>
<feature type="strand" evidence="6">
    <location>
        <begin position="143"/>
        <end position="151"/>
    </location>
</feature>
<feature type="helix" evidence="6">
    <location>
        <begin position="152"/>
        <end position="168"/>
    </location>
</feature>
<feature type="strand" evidence="6">
    <location>
        <begin position="171"/>
        <end position="177"/>
    </location>
</feature>
<feature type="turn" evidence="6">
    <location>
        <begin position="179"/>
        <end position="181"/>
    </location>
</feature>
<feature type="helix" evidence="6">
    <location>
        <begin position="183"/>
        <end position="197"/>
    </location>
</feature>
<feature type="strand" evidence="6">
    <location>
        <begin position="203"/>
        <end position="209"/>
    </location>
</feature>
<feature type="helix" evidence="6">
    <location>
        <begin position="210"/>
        <end position="219"/>
    </location>
</feature>
<feature type="helix" evidence="6">
    <location>
        <begin position="221"/>
        <end position="223"/>
    </location>
</feature>
<feature type="strand" evidence="6">
    <location>
        <begin position="225"/>
        <end position="229"/>
    </location>
</feature>
<feature type="helix" evidence="6">
    <location>
        <begin position="231"/>
        <end position="244"/>
    </location>
</feature>
<feature type="helix" evidence="6">
    <location>
        <begin position="248"/>
        <end position="250"/>
    </location>
</feature>
<feature type="strand" evidence="6">
    <location>
        <begin position="252"/>
        <end position="256"/>
    </location>
</feature>
<feature type="strand" evidence="6">
    <location>
        <begin position="264"/>
        <end position="270"/>
    </location>
</feature>
<feature type="helix" evidence="6">
    <location>
        <begin position="274"/>
        <end position="276"/>
    </location>
</feature>
<feature type="turn" evidence="7">
    <location>
        <begin position="277"/>
        <end position="280"/>
    </location>
</feature>
<feature type="helix" evidence="6">
    <location>
        <begin position="285"/>
        <end position="297"/>
    </location>
</feature>
<feature type="helix" evidence="6">
    <location>
        <begin position="301"/>
        <end position="317"/>
    </location>
</feature>
<feature type="helix" evidence="6">
    <location>
        <begin position="325"/>
        <end position="334"/>
    </location>
</feature>
<keyword id="KW-0002">3D-structure</keyword>
<keyword id="KW-0028">Amino-acid biosynthesis</keyword>
<keyword id="KW-0100">Branched-chain amino acid biosynthesis</keyword>
<keyword id="KW-0963">Cytoplasm</keyword>
<keyword id="KW-0432">Leucine biosynthesis</keyword>
<keyword id="KW-0460">Magnesium</keyword>
<keyword id="KW-0464">Manganese</keyword>
<keyword id="KW-0479">Metal-binding</keyword>
<keyword id="KW-0520">NAD</keyword>
<keyword id="KW-0560">Oxidoreductase</keyword>
<keyword id="KW-1185">Reference proteome</keyword>
<name>LEU3_MYCTU</name>
<protein>
    <recommendedName>
        <fullName evidence="1 3">3-isopropylmalate dehydrogenase</fullName>
        <ecNumber evidence="1 5">1.1.1.85</ecNumber>
    </recommendedName>
    <alternativeName>
        <fullName evidence="1">3-IPM-DH</fullName>
    </alternativeName>
    <alternativeName>
        <fullName evidence="1">Beta-IPM dehydrogenase</fullName>
        <shortName evidence="1">IMDH</shortName>
    </alternativeName>
</protein>
<dbReference type="EC" id="1.1.1.85" evidence="1 5"/>
<dbReference type="EMBL" id="U78887">
    <property type="protein sequence ID" value="AAC45174.1"/>
    <property type="molecule type" value="Genomic_DNA"/>
</dbReference>
<dbReference type="EMBL" id="AL123456">
    <property type="protein sequence ID" value="CCP45800.1"/>
    <property type="molecule type" value="Genomic_DNA"/>
</dbReference>
<dbReference type="PIR" id="F70854">
    <property type="entry name" value="F70854"/>
</dbReference>
<dbReference type="RefSeq" id="NP_217511.1">
    <property type="nucleotide sequence ID" value="NC_000962.3"/>
</dbReference>
<dbReference type="RefSeq" id="WP_003899576.1">
    <property type="nucleotide sequence ID" value="NZ_NVQJ01000041.1"/>
</dbReference>
<dbReference type="PDB" id="1W0D">
    <property type="method" value="X-ray"/>
    <property type="resolution" value="1.65 A"/>
    <property type="chains" value="A/B/C/D=2-336"/>
</dbReference>
<dbReference type="PDB" id="2G4O">
    <property type="method" value="X-ray"/>
    <property type="resolution" value="2.00 A"/>
    <property type="chains" value="A/B/C/D=2-336"/>
</dbReference>
<dbReference type="PDBsum" id="1W0D"/>
<dbReference type="PDBsum" id="2G4O"/>
<dbReference type="SMR" id="P9WKK9"/>
<dbReference type="FunCoup" id="P9WKK9">
    <property type="interactions" value="477"/>
</dbReference>
<dbReference type="STRING" id="83332.Rv2995c"/>
<dbReference type="PaxDb" id="83332-Rv2995c"/>
<dbReference type="DNASU" id="888182"/>
<dbReference type="GeneID" id="888182"/>
<dbReference type="KEGG" id="mtu:Rv2995c"/>
<dbReference type="KEGG" id="mtv:RVBD_2995c"/>
<dbReference type="TubercuList" id="Rv2995c"/>
<dbReference type="eggNOG" id="COG0473">
    <property type="taxonomic scope" value="Bacteria"/>
</dbReference>
<dbReference type="InParanoid" id="P9WKK9"/>
<dbReference type="OrthoDB" id="5289857at2"/>
<dbReference type="PhylomeDB" id="P9WKK9"/>
<dbReference type="BRENDA" id="1.1.1.85">
    <property type="organism ID" value="3445"/>
</dbReference>
<dbReference type="UniPathway" id="UPA00048">
    <property type="reaction ID" value="UER00072"/>
</dbReference>
<dbReference type="EvolutionaryTrace" id="P9WKK9"/>
<dbReference type="Proteomes" id="UP000001584">
    <property type="component" value="Chromosome"/>
</dbReference>
<dbReference type="GO" id="GO:0005737">
    <property type="term" value="C:cytoplasm"/>
    <property type="evidence" value="ECO:0007669"/>
    <property type="project" value="UniProtKB-SubCell"/>
</dbReference>
<dbReference type="GO" id="GO:0003862">
    <property type="term" value="F:3-isopropylmalate dehydrogenase activity"/>
    <property type="evidence" value="ECO:0000314"/>
    <property type="project" value="MTBBASE"/>
</dbReference>
<dbReference type="GO" id="GO:0000287">
    <property type="term" value="F:magnesium ion binding"/>
    <property type="evidence" value="ECO:0007669"/>
    <property type="project" value="InterPro"/>
</dbReference>
<dbReference type="GO" id="GO:0051287">
    <property type="term" value="F:NAD binding"/>
    <property type="evidence" value="ECO:0007669"/>
    <property type="project" value="InterPro"/>
</dbReference>
<dbReference type="GO" id="GO:0009098">
    <property type="term" value="P:L-leucine biosynthetic process"/>
    <property type="evidence" value="ECO:0007669"/>
    <property type="project" value="UniProtKB-UniRule"/>
</dbReference>
<dbReference type="FunFam" id="3.40.718.10:FF:000026">
    <property type="entry name" value="3-isopropylmalate dehydrogenase"/>
    <property type="match status" value="1"/>
</dbReference>
<dbReference type="Gene3D" id="3.40.718.10">
    <property type="entry name" value="Isopropylmalate Dehydrogenase"/>
    <property type="match status" value="1"/>
</dbReference>
<dbReference type="HAMAP" id="MF_01035">
    <property type="entry name" value="LeuB_type2"/>
    <property type="match status" value="1"/>
</dbReference>
<dbReference type="InterPro" id="IPR050501">
    <property type="entry name" value="ICDH/IPMDH"/>
</dbReference>
<dbReference type="InterPro" id="IPR019818">
    <property type="entry name" value="IsoCit/isopropylmalate_DH_CS"/>
</dbReference>
<dbReference type="InterPro" id="IPR024084">
    <property type="entry name" value="IsoPropMal-DH-like_dom"/>
</dbReference>
<dbReference type="InterPro" id="IPR023698">
    <property type="entry name" value="LeuB_actb"/>
</dbReference>
<dbReference type="NCBIfam" id="NF002898">
    <property type="entry name" value="PRK03437.1"/>
    <property type="match status" value="1"/>
</dbReference>
<dbReference type="PANTHER" id="PTHR43275">
    <property type="entry name" value="D-MALATE DEHYDROGENASE [DECARBOXYLATING]"/>
    <property type="match status" value="1"/>
</dbReference>
<dbReference type="PANTHER" id="PTHR43275:SF1">
    <property type="entry name" value="D-MALATE DEHYDROGENASE [DECARBOXYLATING]"/>
    <property type="match status" value="1"/>
</dbReference>
<dbReference type="Pfam" id="PF00180">
    <property type="entry name" value="Iso_dh"/>
    <property type="match status" value="1"/>
</dbReference>
<dbReference type="SMART" id="SM01329">
    <property type="entry name" value="Iso_dh"/>
    <property type="match status" value="1"/>
</dbReference>
<dbReference type="SUPFAM" id="SSF53659">
    <property type="entry name" value="Isocitrate/Isopropylmalate dehydrogenase-like"/>
    <property type="match status" value="1"/>
</dbReference>
<dbReference type="PROSITE" id="PS00470">
    <property type="entry name" value="IDH_IMDH"/>
    <property type="match status" value="1"/>
</dbReference>
<accession>P9WKK9</accession>
<accession>L0TB88</accession>
<accession>P95313</accession>
<evidence type="ECO:0000255" key="1">
    <source>
        <dbReference type="HAMAP-Rule" id="MF_01035"/>
    </source>
</evidence>
<evidence type="ECO:0000269" key="2">
    <source>
    </source>
</evidence>
<evidence type="ECO:0000303" key="3">
    <source>
    </source>
</evidence>
<evidence type="ECO:0000305" key="4"/>
<evidence type="ECO:0000305" key="5">
    <source>
    </source>
</evidence>
<evidence type="ECO:0007829" key="6">
    <source>
        <dbReference type="PDB" id="1W0D"/>
    </source>
</evidence>
<evidence type="ECO:0007829" key="7">
    <source>
        <dbReference type="PDB" id="2G4O"/>
    </source>
</evidence>
<sequence>MKLAIIAGDGIGPEVTAEAVKVLDAVVPGVQKTSYDLGARRFHATGEVLPDSVVAELRNHDAILLGAIGDPSVPSGVLERGLLLRLRFELDHHINLRPARLYPGVASPLSGNPGIDFVVVREGTEGPYTGNGGAIRVGTPNEVATEVSVNTAFGVRRVVADAFERARRRRKHLTLVHKTNVLTFAGGLWLRTVDEVGECYPDVEVAYQHVDAATIHMITDPGRFDVIVTDNLFGDIITDLAAAVCGGIGLAASGNIDATRANPSMFEPVHGSAPDIAGQGIADPTAAIMSVALLLSHLGEHDAAARVDRAVEAHLATRGSERLATSDVGERIAAAL</sequence>
<reference key="1">
    <citation type="journal article" date="1997" name="Biochem. Mol. Biol. Int.">
        <title>Molecular cloning of the leuB genes from Mycobacterium bovis BCG and Mycobacterium tuberculosis.</title>
        <authorList>
            <person name="Han M.Y."/>
            <person name="Son M.Y."/>
            <person name="Lee S.H."/>
            <person name="Kim J.K."/>
            <person name="Huh J.S."/>
            <person name="Kim J.H."/>
            <person name="Choe I.S."/>
            <person name="Chung T.W."/>
            <person name="Choe Y.K."/>
        </authorList>
    </citation>
    <scope>NUCLEOTIDE SEQUENCE [GENOMIC DNA]</scope>
</reference>
<reference key="2">
    <citation type="journal article" date="1998" name="Nature">
        <title>Deciphering the biology of Mycobacterium tuberculosis from the complete genome sequence.</title>
        <authorList>
            <person name="Cole S.T."/>
            <person name="Brosch R."/>
            <person name="Parkhill J."/>
            <person name="Garnier T."/>
            <person name="Churcher C.M."/>
            <person name="Harris D.E."/>
            <person name="Gordon S.V."/>
            <person name="Eiglmeier K."/>
            <person name="Gas S."/>
            <person name="Barry C.E. III"/>
            <person name="Tekaia F."/>
            <person name="Badcock K."/>
            <person name="Basham D."/>
            <person name="Brown D."/>
            <person name="Chillingworth T."/>
            <person name="Connor R."/>
            <person name="Davies R.M."/>
            <person name="Devlin K."/>
            <person name="Feltwell T."/>
            <person name="Gentles S."/>
            <person name="Hamlin N."/>
            <person name="Holroyd S."/>
            <person name="Hornsby T."/>
            <person name="Jagels K."/>
            <person name="Krogh A."/>
            <person name="McLean J."/>
            <person name="Moule S."/>
            <person name="Murphy L.D."/>
            <person name="Oliver S."/>
            <person name="Osborne J."/>
            <person name="Quail M.A."/>
            <person name="Rajandream M.A."/>
            <person name="Rogers J."/>
            <person name="Rutter S."/>
            <person name="Seeger K."/>
            <person name="Skelton S."/>
            <person name="Squares S."/>
            <person name="Squares R."/>
            <person name="Sulston J.E."/>
            <person name="Taylor K."/>
            <person name="Whitehead S."/>
            <person name="Barrell B.G."/>
        </authorList>
    </citation>
    <scope>NUCLEOTIDE SEQUENCE [LARGE SCALE GENOMIC DNA]</scope>
    <source>
        <strain>ATCC 25618 / H37Rv</strain>
    </source>
</reference>
<reference key="3">
    <citation type="journal article" date="2011" name="Mol. Cell. Proteomics">
        <title>Proteogenomic analysis of Mycobacterium tuberculosis by high resolution mass spectrometry.</title>
        <authorList>
            <person name="Kelkar D.S."/>
            <person name="Kumar D."/>
            <person name="Kumar P."/>
            <person name="Balakrishnan L."/>
            <person name="Muthusamy B."/>
            <person name="Yadav A.K."/>
            <person name="Shrivastava P."/>
            <person name="Marimuthu A."/>
            <person name="Anand S."/>
            <person name="Sundaram H."/>
            <person name="Kingsbury R."/>
            <person name="Harsha H.C."/>
            <person name="Nair B."/>
            <person name="Prasad T.S."/>
            <person name="Chauhan D.S."/>
            <person name="Katoch K."/>
            <person name="Katoch V.M."/>
            <person name="Kumar P."/>
            <person name="Chaerkady R."/>
            <person name="Ramachandran S."/>
            <person name="Dash D."/>
            <person name="Pandey A."/>
        </authorList>
    </citation>
    <scope>IDENTIFICATION BY MASS SPECTROMETRY [LARGE SCALE ANALYSIS]</scope>
    <source>
        <strain>ATCC 25618 / H37Rv</strain>
    </source>
</reference>
<reference key="4">
    <citation type="journal article" date="2005" name="J. Mol. Biol.">
        <title>The high-resolution Structure of LeuB (Rv2995c) from Mycobacterium tuberculosis.</title>
        <authorList>
            <person name="Singh R.K."/>
            <person name="Kefala G."/>
            <person name="Janowski R."/>
            <person name="Mueller-Dieckmann C."/>
            <person name="von Kries J.-P."/>
            <person name="Weiss M.S."/>
        </authorList>
    </citation>
    <scope>X-RAY CRYSTALLOGRAPHY (1.65 ANGSTROMS) OF 2-336</scope>
    <scope>SUBUNIT</scope>
</reference>
<gene>
    <name evidence="3" type="primary">leuB</name>
    <name type="ordered locus">Rv2995c</name>
    <name type="ORF">MTV012.09</name>
</gene>
<comment type="function">
    <text evidence="1">Catalyzes the oxidation of 3-carboxy-2-hydroxy-4-methylpentanoate (3-isopropylmalate) to 3-carboxy-4-methyl-2-oxopentanoate. The product decarboxylates to 4-methyl-2 oxopentanoate.</text>
</comment>
<comment type="catalytic activity">
    <reaction evidence="1 5">
        <text>(2R,3S)-3-isopropylmalate + NAD(+) = 4-methyl-2-oxopentanoate + CO2 + NADH</text>
        <dbReference type="Rhea" id="RHEA:32271"/>
        <dbReference type="ChEBI" id="CHEBI:16526"/>
        <dbReference type="ChEBI" id="CHEBI:17865"/>
        <dbReference type="ChEBI" id="CHEBI:35121"/>
        <dbReference type="ChEBI" id="CHEBI:57540"/>
        <dbReference type="ChEBI" id="CHEBI:57945"/>
        <dbReference type="EC" id="1.1.1.85"/>
    </reaction>
</comment>
<comment type="cofactor">
    <cofactor evidence="1">
        <name>Mg(2+)</name>
        <dbReference type="ChEBI" id="CHEBI:18420"/>
    </cofactor>
    <cofactor evidence="1">
        <name>Mn(2+)</name>
        <dbReference type="ChEBI" id="CHEBI:29035"/>
    </cofactor>
    <text evidence="1">Binds 1 Mg(2+) or Mn(2+) ion per subunit.</text>
</comment>
<comment type="pathway">
    <text evidence="1">Amino-acid biosynthesis; L-leucine biosynthesis; L-leucine from 3-methyl-2-oxobutanoate: step 3/4.</text>
</comment>
<comment type="subunit">
    <text evidence="1 2">Homodimer.</text>
</comment>
<comment type="subcellular location">
    <subcellularLocation>
        <location evidence="1">Cytoplasm</location>
    </subcellularLocation>
</comment>
<comment type="similarity">
    <text evidence="1 4">Belongs to the isocitrate and isopropylmalate dehydrogenases family. LeuB type 2 subfamily.</text>
</comment>
<organism>
    <name type="scientific">Mycobacterium tuberculosis (strain ATCC 25618 / H37Rv)</name>
    <dbReference type="NCBI Taxonomy" id="83332"/>
    <lineage>
        <taxon>Bacteria</taxon>
        <taxon>Bacillati</taxon>
        <taxon>Actinomycetota</taxon>
        <taxon>Actinomycetes</taxon>
        <taxon>Mycobacteriales</taxon>
        <taxon>Mycobacteriaceae</taxon>
        <taxon>Mycobacterium</taxon>
        <taxon>Mycobacterium tuberculosis complex</taxon>
    </lineage>
</organism>